<gene>
    <name type="ordered locus">YPL261C</name>
    <name type="ORF">P0386</name>
</gene>
<reference key="1">
    <citation type="journal article" date="1997" name="Nature">
        <title>The nucleotide sequence of Saccharomyces cerevisiae chromosome XVI.</title>
        <authorList>
            <person name="Bussey H."/>
            <person name="Storms R.K."/>
            <person name="Ahmed A."/>
            <person name="Albermann K."/>
            <person name="Allen E."/>
            <person name="Ansorge W."/>
            <person name="Araujo R."/>
            <person name="Aparicio A."/>
            <person name="Barrell B.G."/>
            <person name="Badcock K."/>
            <person name="Benes V."/>
            <person name="Botstein D."/>
            <person name="Bowman S."/>
            <person name="Brueckner M."/>
            <person name="Carpenter J."/>
            <person name="Cherry J.M."/>
            <person name="Chung E."/>
            <person name="Churcher C.M."/>
            <person name="Coster F."/>
            <person name="Davis K."/>
            <person name="Davis R.W."/>
            <person name="Dietrich F.S."/>
            <person name="Delius H."/>
            <person name="DiPaolo T."/>
            <person name="Dubois E."/>
            <person name="Duesterhoeft A."/>
            <person name="Duncan M."/>
            <person name="Floeth M."/>
            <person name="Fortin N."/>
            <person name="Friesen J.D."/>
            <person name="Fritz C."/>
            <person name="Goffeau A."/>
            <person name="Hall J."/>
            <person name="Hebling U."/>
            <person name="Heumann K."/>
            <person name="Hilbert H."/>
            <person name="Hillier L.W."/>
            <person name="Hunicke-Smith S."/>
            <person name="Hyman R.W."/>
            <person name="Johnston M."/>
            <person name="Kalman S."/>
            <person name="Kleine K."/>
            <person name="Komp C."/>
            <person name="Kurdi O."/>
            <person name="Lashkari D."/>
            <person name="Lew H."/>
            <person name="Lin A."/>
            <person name="Lin D."/>
            <person name="Louis E.J."/>
            <person name="Marathe R."/>
            <person name="Messenguy F."/>
            <person name="Mewes H.-W."/>
            <person name="Mirtipati S."/>
            <person name="Moestl D."/>
            <person name="Mueller-Auer S."/>
            <person name="Namath A."/>
            <person name="Nentwich U."/>
            <person name="Oefner P."/>
            <person name="Pearson D."/>
            <person name="Petel F.X."/>
            <person name="Pohl T.M."/>
            <person name="Purnelle B."/>
            <person name="Rajandream M.A."/>
            <person name="Rechmann S."/>
            <person name="Rieger M."/>
            <person name="Riles L."/>
            <person name="Roberts D."/>
            <person name="Schaefer M."/>
            <person name="Scharfe M."/>
            <person name="Scherens B."/>
            <person name="Schramm S."/>
            <person name="Schroeder M."/>
            <person name="Sdicu A.-M."/>
            <person name="Tettelin H."/>
            <person name="Urrestarazu L.A."/>
            <person name="Ushinsky S."/>
            <person name="Vierendeels F."/>
            <person name="Vissers S."/>
            <person name="Voss H."/>
            <person name="Walsh S.V."/>
            <person name="Wambutt R."/>
            <person name="Wang Y."/>
            <person name="Wedler E."/>
            <person name="Wedler H."/>
            <person name="Winnett E."/>
            <person name="Zhong W.-W."/>
            <person name="Zollner A."/>
            <person name="Vo D.H."/>
            <person name="Hani J."/>
        </authorList>
    </citation>
    <scope>NUCLEOTIDE SEQUENCE [LARGE SCALE GENOMIC DNA]</scope>
    <source>
        <strain>ATCC 204508 / S288c</strain>
    </source>
</reference>
<reference key="2">
    <citation type="journal article" date="2014" name="G3 (Bethesda)">
        <title>The reference genome sequence of Saccharomyces cerevisiae: Then and now.</title>
        <authorList>
            <person name="Engel S.R."/>
            <person name="Dietrich F.S."/>
            <person name="Fisk D.G."/>
            <person name="Binkley G."/>
            <person name="Balakrishnan R."/>
            <person name="Costanzo M.C."/>
            <person name="Dwight S.S."/>
            <person name="Hitz B.C."/>
            <person name="Karra K."/>
            <person name="Nash R.S."/>
            <person name="Weng S."/>
            <person name="Wong E.D."/>
            <person name="Lloyd P."/>
            <person name="Skrzypek M.S."/>
            <person name="Miyasato S.R."/>
            <person name="Simison M."/>
            <person name="Cherry J.M."/>
        </authorList>
    </citation>
    <scope>GENOME REANNOTATION</scope>
    <source>
        <strain>ATCC 204508 / S288c</strain>
    </source>
</reference>
<reference key="3">
    <citation type="journal article" date="2007" name="Genome Res.">
        <title>Approaching a complete repository of sequence-verified protein-encoding clones for Saccharomyces cerevisiae.</title>
        <authorList>
            <person name="Hu Y."/>
            <person name="Rolfs A."/>
            <person name="Bhullar B."/>
            <person name="Murthy T.V.S."/>
            <person name="Zhu C."/>
            <person name="Berger M.F."/>
            <person name="Camargo A.A."/>
            <person name="Kelley F."/>
            <person name="McCarron S."/>
            <person name="Jepson D."/>
            <person name="Richardson A."/>
            <person name="Raphael J."/>
            <person name="Moreira D."/>
            <person name="Taycher E."/>
            <person name="Zuo D."/>
            <person name="Mohr S."/>
            <person name="Kane M.F."/>
            <person name="Williamson J."/>
            <person name="Simpson A.J.G."/>
            <person name="Bulyk M.L."/>
            <person name="Harlow E."/>
            <person name="Marsischky G."/>
            <person name="Kolodner R.D."/>
            <person name="LaBaer J."/>
        </authorList>
    </citation>
    <scope>NUCLEOTIDE SEQUENCE [GENOMIC DNA]</scope>
    <source>
        <strain>ATCC 204508 / S288c</strain>
    </source>
</reference>
<feature type="signal peptide" evidence="1">
    <location>
        <begin position="1"/>
        <end position="41"/>
    </location>
</feature>
<feature type="chain" id="PRO_0000299813" description="Uncharacterized protein YPL261C">
    <location>
        <begin position="42"/>
        <end position="102"/>
    </location>
</feature>
<feature type="sequence conflict" description="In Ref. 3; AAT93380." evidence="2" ref="3">
    <original>G</original>
    <variation>E</variation>
    <location>
        <position position="99"/>
    </location>
</feature>
<evidence type="ECO:0000255" key="1"/>
<evidence type="ECO:0000305" key="2"/>
<accession>Q08976</accession>
<accession>A0A1S0T0C2</accession>
<accession>Q6B0R9</accession>
<proteinExistence type="inferred from homology"/>
<protein>
    <recommendedName>
        <fullName>Uncharacterized protein YPL261C</fullName>
    </recommendedName>
</protein>
<organism>
    <name type="scientific">Saccharomyces cerevisiae (strain ATCC 204508 / S288c)</name>
    <name type="common">Baker's yeast</name>
    <dbReference type="NCBI Taxonomy" id="559292"/>
    <lineage>
        <taxon>Eukaryota</taxon>
        <taxon>Fungi</taxon>
        <taxon>Dikarya</taxon>
        <taxon>Ascomycota</taxon>
        <taxon>Saccharomycotina</taxon>
        <taxon>Saccharomycetes</taxon>
        <taxon>Saccharomycetales</taxon>
        <taxon>Saccharomycetaceae</taxon>
        <taxon>Saccharomyces</taxon>
    </lineage>
</organism>
<name>YP261_YEAST</name>
<sequence length="102" mass="11841">MLFLDSYSLLIQFQRFKNWESPRRFSSSFPLLLFVFKPIFAAKLLKEICSSGVLSYSLSFLKIPLSVMRVILGPLPDDKKLKNDAKYSFMNYFIITCIGIIM</sequence>
<dbReference type="EMBL" id="Z73617">
    <property type="protein sequence ID" value="CAA97995.1"/>
    <property type="molecule type" value="Genomic_DNA"/>
</dbReference>
<dbReference type="EMBL" id="AY693361">
    <property type="protein sequence ID" value="AAT93380.1"/>
    <property type="molecule type" value="Genomic_DNA"/>
</dbReference>
<dbReference type="EMBL" id="BK006949">
    <property type="protein sequence ID" value="DAA80341.1"/>
    <property type="molecule type" value="Genomic_DNA"/>
</dbReference>
<dbReference type="PIR" id="S65294">
    <property type="entry name" value="S65294"/>
</dbReference>
<dbReference type="RefSeq" id="NP_001335821.1">
    <property type="nucleotide sequence ID" value="NM_001348883.1"/>
</dbReference>
<dbReference type="SMR" id="Q08976"/>
<dbReference type="FunCoup" id="Q08976">
    <property type="interactions" value="23"/>
</dbReference>
<dbReference type="STRING" id="4932.YPL261C"/>
<dbReference type="PaxDb" id="4932-YPL261C"/>
<dbReference type="EnsemblFungi" id="YPL261C_mRNA">
    <property type="protein sequence ID" value="YPL261C"/>
    <property type="gene ID" value="YPL261C"/>
</dbReference>
<dbReference type="GeneID" id="855868"/>
<dbReference type="AGR" id="SGD:S000006182"/>
<dbReference type="SGD" id="S000006182">
    <property type="gene designation" value="YPL261C"/>
</dbReference>
<dbReference type="HOGENOM" id="CLU_2279654_0_0_1"/>
<dbReference type="InParanoid" id="Q08976"/>
<dbReference type="PRO" id="PR:Q08976"/>
<dbReference type="Proteomes" id="UP000002311">
    <property type="component" value="Chromosome XVI"/>
</dbReference>
<dbReference type="RNAct" id="Q08976">
    <property type="molecule type" value="protein"/>
</dbReference>
<keyword id="KW-1185">Reference proteome</keyword>
<keyword id="KW-0732">Signal</keyword>